<keyword id="KW-0378">Hydrolase</keyword>
<keyword id="KW-0426">Late protein</keyword>
<keyword id="KW-0479">Metal-binding</keyword>
<keyword id="KW-0482">Metalloprotease</keyword>
<keyword id="KW-0645">Protease</keyword>
<keyword id="KW-1185">Reference proteome</keyword>
<keyword id="KW-0946">Virion</keyword>
<keyword id="KW-0862">Zinc</keyword>
<evidence type="ECO:0000250" key="1">
    <source>
        <dbReference type="UniProtKB" id="P16713"/>
    </source>
</evidence>
<evidence type="ECO:0000255" key="2"/>
<evidence type="ECO:0000255" key="3">
    <source>
        <dbReference type="PIRNR" id="PIRNR015679"/>
    </source>
</evidence>
<evidence type="ECO:0000305" key="4"/>
<organism>
    <name type="scientific">Monkeypox virus</name>
    <dbReference type="NCBI Taxonomy" id="10244"/>
    <lineage>
        <taxon>Viruses</taxon>
        <taxon>Varidnaviria</taxon>
        <taxon>Bamfordvirae</taxon>
        <taxon>Nucleocytoviricota</taxon>
        <taxon>Pokkesviricetes</taxon>
        <taxon>Chitovirales</taxon>
        <taxon>Poxviridae</taxon>
        <taxon>Chordopoxvirinae</taxon>
        <taxon>Orthopoxvirus</taxon>
    </lineage>
</organism>
<protein>
    <recommendedName>
        <fullName>Metalloendopeptidase OPG085</fullName>
        <ecNumber evidence="1">3.4.24.-</ecNumber>
    </recommendedName>
    <alternativeName>
        <fullName evidence="3">Metalloendopeptidase</fullName>
    </alternativeName>
</protein>
<comment type="function">
    <text evidence="1">Probably involved in maturation of some viral proteins by processing them preferentially at Ala-Gly-|-Ser/Thr/Lys motifs. Does not seem to be responsible for the cleavage of major core proteins.</text>
</comment>
<comment type="cofactor">
    <cofactor evidence="1">
        <name>Zn(2+)</name>
        <dbReference type="ChEBI" id="CHEBI:29105"/>
    </cofactor>
    <text evidence="1">Binds 1 zinc ion.</text>
</comment>
<comment type="subcellular location">
    <subcellularLocation>
        <location evidence="1">Virion</location>
    </subcellularLocation>
    <text evidence="1">Localizes to the virion core.</text>
</comment>
<comment type="PTM">
    <text evidence="1">Undergoes proteolytic processing during the course of infection. May be cleaved into 46 kDa and 22 kDa products (Potential).</text>
</comment>
<comment type="similarity">
    <text evidence="4">Belongs to the peptidase M44 family.</text>
</comment>
<sequence>MIVLPNKVRIFINDRMKKDIYLGISNFGFENDIDEILGIAHLLEHLLISFDSTNFLANASTSRSYMSFWCKSINSATESDAIRTLVSWFFSNGKLKDNFSLSSIRFHIKELENEYYFRNEVFHCMDILTFLSGGDLYNGGRIDMIDNLNIVRDMLVNRMQRISGSNIVIFVKRLGPGTLDFFKQTFGSLPSCPEIIPSSIPVSTNGKIVMTPAPFYTVMVRINPTLDNILGILYLYETYHLIDYETIGNQLYLTVSFIDETEYESFLRGEAILQISQCQSINMNYSDDYMMNIYLNFPWLSHDLYDYITRINDDSKSILISLTNEIYTSIINRDIIVIYPNFSKAMCNTRDTQQHQIVVLDATNDGLIKKPYRSIPLMKRLTSNEIFIRYGDASLMDMITLSLSKQDISLKRNAEGIRVKHSFSADDIQAIMESDSFLKYSRSKPAAMYQYIFLSFFASGNSIDDILTNRDSTLEFSKRTKSKILFGRNTRYDITAKSSFVCGIVRGKSLDKTSLVEMMWDLKKKGLIYSMEFTNLLSKNTFYLFTFTIYTDEVYDYLNNNKLFSAKCLVVSTKGDVENFSSLKKDVVIRF</sequence>
<reference key="1">
    <citation type="journal article" date="2022" name="J. Infect. Dis.">
        <title>Exportation of Monkeypox virus from the African continent.</title>
        <authorList>
            <person name="Mauldin M.R."/>
            <person name="McCollum A.M."/>
            <person name="Nakazawa Y.J."/>
            <person name="Mandra A."/>
            <person name="Whitehouse E.R."/>
            <person name="Davidson W."/>
            <person name="Zhao H."/>
            <person name="Gao J."/>
            <person name="Li Y."/>
            <person name="Doty J."/>
            <person name="Yinka-Ogunleye A."/>
            <person name="Akinpelu A."/>
            <person name="Aruna O."/>
            <person name="Naidoo D."/>
            <person name="Lewandowski K."/>
            <person name="Afrough B."/>
            <person name="Graham V."/>
            <person name="Aarons E."/>
            <person name="Hewson R."/>
            <person name="Vipond R."/>
            <person name="Dunning J."/>
            <person name="Chand M."/>
            <person name="Brown C."/>
            <person name="Cohen-Gihon I."/>
            <person name="Erez N."/>
            <person name="Shifman O."/>
            <person name="Israeli O."/>
            <person name="Sharon M."/>
            <person name="Schwartz E."/>
            <person name="Beth-Din A."/>
            <person name="Zvi A."/>
            <person name="Mak T.M."/>
            <person name="Ng Y.K."/>
            <person name="Cui L."/>
            <person name="Lin R.T.P."/>
            <person name="Olson V.A."/>
            <person name="Brooks T."/>
            <person name="Paran N."/>
            <person name="Ihekweazu C."/>
            <person name="Reynolds M.G."/>
        </authorList>
    </citation>
    <scope>NUCLEOTIDE SEQUENCE [LARGE SCALE GENOMIC DNA]</scope>
    <source>
        <strain>MPXV-M5312_HM12_Rivers</strain>
    </source>
</reference>
<accession>A0A7H0DN57</accession>
<name>PG085_MONPV</name>
<organismHost>
    <name type="scientific">Cynomys gunnisoni</name>
    <name type="common">Gunnison's prairie dog</name>
    <name type="synonym">Spermophilus gunnisoni</name>
    <dbReference type="NCBI Taxonomy" id="45479"/>
</organismHost>
<organismHost>
    <name type="scientific">Cynomys leucurus</name>
    <name type="common">White-tailed prairie dog</name>
    <dbReference type="NCBI Taxonomy" id="99825"/>
</organismHost>
<organismHost>
    <name type="scientific">Cynomys ludovicianus</name>
    <name type="common">Black-tailed prairie dog</name>
    <dbReference type="NCBI Taxonomy" id="45480"/>
</organismHost>
<organismHost>
    <name type="scientific">Cynomys mexicanus</name>
    <name type="common">Mexican prairie dog</name>
    <dbReference type="NCBI Taxonomy" id="99826"/>
</organismHost>
<organismHost>
    <name type="scientific">Cynomys parvidens</name>
    <name type="common">Utah prairie dog</name>
    <dbReference type="NCBI Taxonomy" id="99827"/>
</organismHost>
<organismHost>
    <name type="scientific">Gliridae</name>
    <name type="common">dormice</name>
    <dbReference type="NCBI Taxonomy" id="30650"/>
</organismHost>
<organismHost>
    <name type="scientific">Heliosciurus ruwenzorii</name>
    <name type="common">Ruwenzori sun squirrel</name>
    <dbReference type="NCBI Taxonomy" id="226685"/>
</organismHost>
<organismHost>
    <name type="scientific">Homo sapiens</name>
    <name type="common">Human</name>
    <dbReference type="NCBI Taxonomy" id="9606"/>
</organismHost>
<organismHost>
    <name type="scientific">Mus musculus</name>
    <name type="common">Mouse</name>
    <dbReference type="NCBI Taxonomy" id="10090"/>
</organismHost>
<gene>
    <name type="primary">OPG085</name>
    <name type="ORF">MPXVgp070</name>
</gene>
<feature type="chain" id="PRO_0000457687" description="Metalloendopeptidase OPG085">
    <location>
        <begin position="1"/>
        <end position="591"/>
    </location>
</feature>
<feature type="active site" evidence="2">
    <location>
        <position position="44"/>
    </location>
</feature>
<feature type="binding site" evidence="2">
    <location>
        <position position="41"/>
    </location>
    <ligand>
        <name>Zn(2+)</name>
        <dbReference type="ChEBI" id="CHEBI:29105"/>
    </ligand>
</feature>
<feature type="binding site" evidence="2">
    <location>
        <position position="45"/>
    </location>
    <ligand>
        <name>Zn(2+)</name>
        <dbReference type="ChEBI" id="CHEBI:29105"/>
    </ligand>
</feature>
<feature type="binding site" evidence="2">
    <location>
        <position position="112"/>
    </location>
    <ligand>
        <name>Zn(2+)</name>
        <dbReference type="ChEBI" id="CHEBI:29105"/>
    </ligand>
</feature>
<dbReference type="EC" id="3.4.24.-" evidence="1"/>
<dbReference type="EMBL" id="MT903340">
    <property type="protein sequence ID" value="QNP12940.1"/>
    <property type="molecule type" value="Genomic_DNA"/>
</dbReference>
<dbReference type="RefSeq" id="YP_010377067.1">
    <property type="nucleotide sequence ID" value="NC_063383.1"/>
</dbReference>
<dbReference type="SMR" id="A0A7H0DN57"/>
<dbReference type="MEROPS" id="M44.001"/>
<dbReference type="GeneID" id="72551480"/>
<dbReference type="Proteomes" id="UP000516359">
    <property type="component" value="Genome"/>
</dbReference>
<dbReference type="GO" id="GO:0044423">
    <property type="term" value="C:virion component"/>
    <property type="evidence" value="ECO:0007669"/>
    <property type="project" value="UniProtKB-KW"/>
</dbReference>
<dbReference type="GO" id="GO:0004222">
    <property type="term" value="F:metalloendopeptidase activity"/>
    <property type="evidence" value="ECO:0007669"/>
    <property type="project" value="InterPro"/>
</dbReference>
<dbReference type="GO" id="GO:0008270">
    <property type="term" value="F:zinc ion binding"/>
    <property type="evidence" value="ECO:0007669"/>
    <property type="project" value="InterPro"/>
</dbReference>
<dbReference type="GO" id="GO:0006508">
    <property type="term" value="P:proteolysis"/>
    <property type="evidence" value="ECO:0007669"/>
    <property type="project" value="UniProtKB-KW"/>
</dbReference>
<dbReference type="GO" id="GO:0019058">
    <property type="term" value="P:viral life cycle"/>
    <property type="evidence" value="ECO:0007669"/>
    <property type="project" value="InterPro"/>
</dbReference>
<dbReference type="InterPro" id="IPR011249">
    <property type="entry name" value="Metalloenz_LuxS/M16"/>
</dbReference>
<dbReference type="InterPro" id="IPR005072">
    <property type="entry name" value="Peptidase_M44"/>
</dbReference>
<dbReference type="Pfam" id="PF03410">
    <property type="entry name" value="Peptidase_M44"/>
    <property type="match status" value="1"/>
</dbReference>
<dbReference type="PIRSF" id="PIRSF015679">
    <property type="entry name" value="Peptidase_M44"/>
    <property type="match status" value="1"/>
</dbReference>
<dbReference type="SUPFAM" id="SSF63411">
    <property type="entry name" value="LuxS/MPP-like metallohydrolase"/>
    <property type="match status" value="1"/>
</dbReference>
<proteinExistence type="inferred from homology"/>